<name>DER_CALS4</name>
<keyword id="KW-0342">GTP-binding</keyword>
<keyword id="KW-0547">Nucleotide-binding</keyword>
<keyword id="KW-1185">Reference proteome</keyword>
<keyword id="KW-0677">Repeat</keyword>
<keyword id="KW-0690">Ribosome biogenesis</keyword>
<protein>
    <recommendedName>
        <fullName evidence="1">GTPase Der</fullName>
    </recommendedName>
    <alternativeName>
        <fullName evidence="1">GTP-binding protein EngA</fullName>
    </alternativeName>
</protein>
<dbReference type="EMBL" id="AE008691">
    <property type="protein sequence ID" value="AAM24821.1"/>
    <property type="molecule type" value="Genomic_DNA"/>
</dbReference>
<dbReference type="RefSeq" id="WP_011025847.1">
    <property type="nucleotide sequence ID" value="NC_003869.1"/>
</dbReference>
<dbReference type="SMR" id="Q8R9J1"/>
<dbReference type="STRING" id="273068.TTE1619"/>
<dbReference type="KEGG" id="tte:TTE1619"/>
<dbReference type="eggNOG" id="COG1160">
    <property type="taxonomic scope" value="Bacteria"/>
</dbReference>
<dbReference type="HOGENOM" id="CLU_016077_6_2_9"/>
<dbReference type="OrthoDB" id="9805918at2"/>
<dbReference type="Proteomes" id="UP000000555">
    <property type="component" value="Chromosome"/>
</dbReference>
<dbReference type="GO" id="GO:0016887">
    <property type="term" value="F:ATP hydrolysis activity"/>
    <property type="evidence" value="ECO:0007669"/>
    <property type="project" value="InterPro"/>
</dbReference>
<dbReference type="GO" id="GO:0005525">
    <property type="term" value="F:GTP binding"/>
    <property type="evidence" value="ECO:0007669"/>
    <property type="project" value="UniProtKB-UniRule"/>
</dbReference>
<dbReference type="GO" id="GO:0043022">
    <property type="term" value="F:ribosome binding"/>
    <property type="evidence" value="ECO:0007669"/>
    <property type="project" value="TreeGrafter"/>
</dbReference>
<dbReference type="GO" id="GO:0042254">
    <property type="term" value="P:ribosome biogenesis"/>
    <property type="evidence" value="ECO:0007669"/>
    <property type="project" value="UniProtKB-KW"/>
</dbReference>
<dbReference type="CDD" id="cd01894">
    <property type="entry name" value="EngA1"/>
    <property type="match status" value="1"/>
</dbReference>
<dbReference type="CDD" id="cd01895">
    <property type="entry name" value="EngA2"/>
    <property type="match status" value="1"/>
</dbReference>
<dbReference type="FunFam" id="3.30.300.20:FF:000004">
    <property type="entry name" value="GTPase Der"/>
    <property type="match status" value="1"/>
</dbReference>
<dbReference type="FunFam" id="3.40.50.300:FF:000040">
    <property type="entry name" value="GTPase Der"/>
    <property type="match status" value="1"/>
</dbReference>
<dbReference type="FunFam" id="3.40.50.300:FF:000057">
    <property type="entry name" value="GTPase Der"/>
    <property type="match status" value="1"/>
</dbReference>
<dbReference type="Gene3D" id="3.30.300.20">
    <property type="match status" value="1"/>
</dbReference>
<dbReference type="Gene3D" id="3.40.50.300">
    <property type="entry name" value="P-loop containing nucleotide triphosphate hydrolases"/>
    <property type="match status" value="2"/>
</dbReference>
<dbReference type="HAMAP" id="MF_00195">
    <property type="entry name" value="GTPase_Der"/>
    <property type="match status" value="1"/>
</dbReference>
<dbReference type="InterPro" id="IPR003593">
    <property type="entry name" value="AAA+_ATPase"/>
</dbReference>
<dbReference type="InterPro" id="IPR031166">
    <property type="entry name" value="G_ENGA"/>
</dbReference>
<dbReference type="InterPro" id="IPR006073">
    <property type="entry name" value="GTP-bd"/>
</dbReference>
<dbReference type="InterPro" id="IPR016484">
    <property type="entry name" value="GTPase_Der"/>
</dbReference>
<dbReference type="InterPro" id="IPR032859">
    <property type="entry name" value="KH_dom-like"/>
</dbReference>
<dbReference type="InterPro" id="IPR015946">
    <property type="entry name" value="KH_dom-like_a/b"/>
</dbReference>
<dbReference type="InterPro" id="IPR027417">
    <property type="entry name" value="P-loop_NTPase"/>
</dbReference>
<dbReference type="InterPro" id="IPR005225">
    <property type="entry name" value="Small_GTP-bd"/>
</dbReference>
<dbReference type="NCBIfam" id="TIGR03594">
    <property type="entry name" value="GTPase_EngA"/>
    <property type="match status" value="1"/>
</dbReference>
<dbReference type="NCBIfam" id="TIGR00231">
    <property type="entry name" value="small_GTP"/>
    <property type="match status" value="2"/>
</dbReference>
<dbReference type="PANTHER" id="PTHR43834">
    <property type="entry name" value="GTPASE DER"/>
    <property type="match status" value="1"/>
</dbReference>
<dbReference type="PANTHER" id="PTHR43834:SF6">
    <property type="entry name" value="GTPASE DER"/>
    <property type="match status" value="1"/>
</dbReference>
<dbReference type="Pfam" id="PF14714">
    <property type="entry name" value="KH_dom-like"/>
    <property type="match status" value="1"/>
</dbReference>
<dbReference type="Pfam" id="PF01926">
    <property type="entry name" value="MMR_HSR1"/>
    <property type="match status" value="2"/>
</dbReference>
<dbReference type="PIRSF" id="PIRSF006485">
    <property type="entry name" value="GTP-binding_EngA"/>
    <property type="match status" value="1"/>
</dbReference>
<dbReference type="PRINTS" id="PR00326">
    <property type="entry name" value="GTP1OBG"/>
</dbReference>
<dbReference type="SMART" id="SM00382">
    <property type="entry name" value="AAA"/>
    <property type="match status" value="2"/>
</dbReference>
<dbReference type="SUPFAM" id="SSF52540">
    <property type="entry name" value="P-loop containing nucleoside triphosphate hydrolases"/>
    <property type="match status" value="2"/>
</dbReference>
<dbReference type="PROSITE" id="PS51712">
    <property type="entry name" value="G_ENGA"/>
    <property type="match status" value="2"/>
</dbReference>
<reference key="1">
    <citation type="journal article" date="2002" name="Genome Res.">
        <title>A complete sequence of the T. tengcongensis genome.</title>
        <authorList>
            <person name="Bao Q."/>
            <person name="Tian Y."/>
            <person name="Li W."/>
            <person name="Xu Z."/>
            <person name="Xuan Z."/>
            <person name="Hu S."/>
            <person name="Dong W."/>
            <person name="Yang J."/>
            <person name="Chen Y."/>
            <person name="Xue Y."/>
            <person name="Xu Y."/>
            <person name="Lai X."/>
            <person name="Huang L."/>
            <person name="Dong X."/>
            <person name="Ma Y."/>
            <person name="Ling L."/>
            <person name="Tan H."/>
            <person name="Chen R."/>
            <person name="Wang J."/>
            <person name="Yu J."/>
            <person name="Yang H."/>
        </authorList>
    </citation>
    <scope>NUCLEOTIDE SEQUENCE [LARGE SCALE GENOMIC DNA]</scope>
    <source>
        <strain>DSM 15242 / JCM 11007 / NBRC 100824 / MB4</strain>
    </source>
</reference>
<proteinExistence type="inferred from homology"/>
<accession>Q8R9J1</accession>
<comment type="function">
    <text evidence="1">GTPase that plays an essential role in the late steps of ribosome biogenesis.</text>
</comment>
<comment type="subunit">
    <text evidence="1">Associates with the 50S ribosomal subunit.</text>
</comment>
<comment type="similarity">
    <text evidence="1">Belongs to the TRAFAC class TrmE-Era-EngA-EngB-Septin-like GTPase superfamily. EngA (Der) GTPase family.</text>
</comment>
<sequence length="439" mass="49432">MSRAMVAIVGRPNVGKSTLFNRILKRRISIVEDIPGVTRDRIYGNAEWLNRKFILVDTGGLDPDPKDVIFSKVKLQVEAAIEAADLILFVVDAREGLVPEDEEIANMLRKTKKEVILVCNKVDSFKEMPASFYDFFKLGLGEPIPISASNGLGIGELLDEVIKRLPENDVEYEEETIKIAVIGRPNVGKSSLVNRILGEERVIVSDIPGTTRDAIDTPFTKDGRNYILIDTAGIRRKSRISESIERYSVLRALAAIERADICLLMIDATEGPTEQDTKIAGYAFENGKGIIILVNKWDIVEKDSNTYKEYTEMIREKLAFISFAPILFISAKTGQRIHKVLETVDKVWEEYNKRITTGLLNNVLNEAMLMFPPPSSKGRPIKIYYATQVGTKPPTFVIFVNEPELLHFSYVRFLENTIRQNFGFEGVPIVISTKKRGED</sequence>
<feature type="chain" id="PRO_0000179065" description="GTPase Der">
    <location>
        <begin position="1"/>
        <end position="439"/>
    </location>
</feature>
<feature type="domain" description="EngA-type G 1">
    <location>
        <begin position="4"/>
        <end position="169"/>
    </location>
</feature>
<feature type="domain" description="EngA-type G 2">
    <location>
        <begin position="177"/>
        <end position="352"/>
    </location>
</feature>
<feature type="domain" description="KH-like" evidence="1">
    <location>
        <begin position="353"/>
        <end position="437"/>
    </location>
</feature>
<feature type="binding site" evidence="1">
    <location>
        <begin position="10"/>
        <end position="17"/>
    </location>
    <ligand>
        <name>GTP</name>
        <dbReference type="ChEBI" id="CHEBI:37565"/>
        <label>1</label>
    </ligand>
</feature>
<feature type="binding site" evidence="1">
    <location>
        <begin position="57"/>
        <end position="61"/>
    </location>
    <ligand>
        <name>GTP</name>
        <dbReference type="ChEBI" id="CHEBI:37565"/>
        <label>1</label>
    </ligand>
</feature>
<feature type="binding site" evidence="1">
    <location>
        <begin position="120"/>
        <end position="123"/>
    </location>
    <ligand>
        <name>GTP</name>
        <dbReference type="ChEBI" id="CHEBI:37565"/>
        <label>1</label>
    </ligand>
</feature>
<feature type="binding site" evidence="1">
    <location>
        <begin position="183"/>
        <end position="190"/>
    </location>
    <ligand>
        <name>GTP</name>
        <dbReference type="ChEBI" id="CHEBI:37565"/>
        <label>2</label>
    </ligand>
</feature>
<feature type="binding site" evidence="1">
    <location>
        <begin position="230"/>
        <end position="234"/>
    </location>
    <ligand>
        <name>GTP</name>
        <dbReference type="ChEBI" id="CHEBI:37565"/>
        <label>2</label>
    </ligand>
</feature>
<feature type="binding site" evidence="1">
    <location>
        <begin position="295"/>
        <end position="298"/>
    </location>
    <ligand>
        <name>GTP</name>
        <dbReference type="ChEBI" id="CHEBI:37565"/>
        <label>2</label>
    </ligand>
</feature>
<gene>
    <name evidence="1" type="primary">der</name>
    <name type="synonym">engA</name>
    <name type="ordered locus">TTE1619</name>
</gene>
<organism>
    <name type="scientific">Caldanaerobacter subterraneus subsp. tengcongensis (strain DSM 15242 / JCM 11007 / NBRC 100824 / MB4)</name>
    <name type="common">Thermoanaerobacter tengcongensis</name>
    <dbReference type="NCBI Taxonomy" id="273068"/>
    <lineage>
        <taxon>Bacteria</taxon>
        <taxon>Bacillati</taxon>
        <taxon>Bacillota</taxon>
        <taxon>Clostridia</taxon>
        <taxon>Thermoanaerobacterales</taxon>
        <taxon>Thermoanaerobacteraceae</taxon>
        <taxon>Caldanaerobacter</taxon>
    </lineage>
</organism>
<evidence type="ECO:0000255" key="1">
    <source>
        <dbReference type="HAMAP-Rule" id="MF_00195"/>
    </source>
</evidence>